<organism>
    <name type="scientific">Salmonella newport (strain SL254)</name>
    <dbReference type="NCBI Taxonomy" id="423368"/>
    <lineage>
        <taxon>Bacteria</taxon>
        <taxon>Pseudomonadati</taxon>
        <taxon>Pseudomonadota</taxon>
        <taxon>Gammaproteobacteria</taxon>
        <taxon>Enterobacterales</taxon>
        <taxon>Enterobacteriaceae</taxon>
        <taxon>Salmonella</taxon>
    </lineage>
</organism>
<accession>B4SV09</accession>
<keyword id="KW-0963">Cytoplasm</keyword>
<keyword id="KW-0441">Lipid A biosynthesis</keyword>
<keyword id="KW-0444">Lipid biosynthesis</keyword>
<keyword id="KW-0443">Lipid metabolism</keyword>
<keyword id="KW-0456">Lyase</keyword>
<dbReference type="EC" id="4.2.1.59" evidence="1"/>
<dbReference type="EMBL" id="CP001113">
    <property type="protein sequence ID" value="ACF65160.1"/>
    <property type="molecule type" value="Genomic_DNA"/>
</dbReference>
<dbReference type="RefSeq" id="WP_000210741.1">
    <property type="nucleotide sequence ID" value="NZ_CCMR01000003.1"/>
</dbReference>
<dbReference type="SMR" id="B4SV09"/>
<dbReference type="GeneID" id="66754751"/>
<dbReference type="KEGG" id="see:SNSL254_A0249"/>
<dbReference type="HOGENOM" id="CLU_078912_1_0_6"/>
<dbReference type="Proteomes" id="UP000008824">
    <property type="component" value="Chromosome"/>
</dbReference>
<dbReference type="GO" id="GO:0005737">
    <property type="term" value="C:cytoplasm"/>
    <property type="evidence" value="ECO:0007669"/>
    <property type="project" value="UniProtKB-SubCell"/>
</dbReference>
<dbReference type="GO" id="GO:0016020">
    <property type="term" value="C:membrane"/>
    <property type="evidence" value="ECO:0007669"/>
    <property type="project" value="GOC"/>
</dbReference>
<dbReference type="GO" id="GO:0019171">
    <property type="term" value="F:(3R)-hydroxyacyl-[acyl-carrier-protein] dehydratase activity"/>
    <property type="evidence" value="ECO:0007669"/>
    <property type="project" value="UniProtKB-EC"/>
</dbReference>
<dbReference type="GO" id="GO:0006633">
    <property type="term" value="P:fatty acid biosynthetic process"/>
    <property type="evidence" value="ECO:0007669"/>
    <property type="project" value="UniProtKB-UniRule"/>
</dbReference>
<dbReference type="GO" id="GO:0009245">
    <property type="term" value="P:lipid A biosynthetic process"/>
    <property type="evidence" value="ECO:0007669"/>
    <property type="project" value="UniProtKB-UniRule"/>
</dbReference>
<dbReference type="CDD" id="cd01288">
    <property type="entry name" value="FabZ"/>
    <property type="match status" value="1"/>
</dbReference>
<dbReference type="FunFam" id="3.10.129.10:FF:000001">
    <property type="entry name" value="3-hydroxyacyl-[acyl-carrier-protein] dehydratase FabZ"/>
    <property type="match status" value="1"/>
</dbReference>
<dbReference type="Gene3D" id="3.10.129.10">
    <property type="entry name" value="Hotdog Thioesterase"/>
    <property type="match status" value="1"/>
</dbReference>
<dbReference type="HAMAP" id="MF_00406">
    <property type="entry name" value="FabZ"/>
    <property type="match status" value="1"/>
</dbReference>
<dbReference type="InterPro" id="IPR013114">
    <property type="entry name" value="FabA_FabZ"/>
</dbReference>
<dbReference type="InterPro" id="IPR010084">
    <property type="entry name" value="FabZ"/>
</dbReference>
<dbReference type="InterPro" id="IPR029069">
    <property type="entry name" value="HotDog_dom_sf"/>
</dbReference>
<dbReference type="NCBIfam" id="TIGR01750">
    <property type="entry name" value="fabZ"/>
    <property type="match status" value="1"/>
</dbReference>
<dbReference type="NCBIfam" id="NF000582">
    <property type="entry name" value="PRK00006.1"/>
    <property type="match status" value="1"/>
</dbReference>
<dbReference type="PANTHER" id="PTHR30272">
    <property type="entry name" value="3-HYDROXYACYL-[ACYL-CARRIER-PROTEIN] DEHYDRATASE"/>
    <property type="match status" value="1"/>
</dbReference>
<dbReference type="PANTHER" id="PTHR30272:SF1">
    <property type="entry name" value="3-HYDROXYACYL-[ACYL-CARRIER-PROTEIN] DEHYDRATASE"/>
    <property type="match status" value="1"/>
</dbReference>
<dbReference type="Pfam" id="PF07977">
    <property type="entry name" value="FabA"/>
    <property type="match status" value="1"/>
</dbReference>
<dbReference type="SUPFAM" id="SSF54637">
    <property type="entry name" value="Thioesterase/thiol ester dehydrase-isomerase"/>
    <property type="match status" value="1"/>
</dbReference>
<feature type="chain" id="PRO_1000123663" description="3-hydroxyacyl-[acyl-carrier-protein] dehydratase FabZ">
    <location>
        <begin position="1"/>
        <end position="151"/>
    </location>
</feature>
<feature type="active site" evidence="1">
    <location>
        <position position="54"/>
    </location>
</feature>
<gene>
    <name evidence="1" type="primary">fabZ</name>
    <name type="ordered locus">SNSL254_A0249</name>
</gene>
<sequence>MTTNTHTLQIEEILELLPHRFPFLLVDRVLDFEEGRFLRAVKNVSVNEPFFQGHFPGKPILPGVLILEAMAQATGILAFKSVGKLEPGELYYFAGIDEARFKRPVVPGDQMIMEVTFEKTRRGLTRFKGVALVDGKVVCEATMMCARSREA</sequence>
<comment type="function">
    <text evidence="1">Involved in unsaturated fatty acids biosynthesis. Catalyzes the dehydration of short chain beta-hydroxyacyl-ACPs and long chain saturated and unsaturated beta-hydroxyacyl-ACPs.</text>
</comment>
<comment type="catalytic activity">
    <reaction evidence="1">
        <text>a (3R)-hydroxyacyl-[ACP] = a (2E)-enoyl-[ACP] + H2O</text>
        <dbReference type="Rhea" id="RHEA:13097"/>
        <dbReference type="Rhea" id="RHEA-COMP:9925"/>
        <dbReference type="Rhea" id="RHEA-COMP:9945"/>
        <dbReference type="ChEBI" id="CHEBI:15377"/>
        <dbReference type="ChEBI" id="CHEBI:78784"/>
        <dbReference type="ChEBI" id="CHEBI:78827"/>
        <dbReference type="EC" id="4.2.1.59"/>
    </reaction>
</comment>
<comment type="subcellular location">
    <subcellularLocation>
        <location evidence="1">Cytoplasm</location>
    </subcellularLocation>
</comment>
<comment type="similarity">
    <text evidence="1">Belongs to the thioester dehydratase family. FabZ subfamily.</text>
</comment>
<name>FABZ_SALNS</name>
<reference key="1">
    <citation type="journal article" date="2011" name="J. Bacteriol.">
        <title>Comparative genomics of 28 Salmonella enterica isolates: evidence for CRISPR-mediated adaptive sublineage evolution.</title>
        <authorList>
            <person name="Fricke W.F."/>
            <person name="Mammel M.K."/>
            <person name="McDermott P.F."/>
            <person name="Tartera C."/>
            <person name="White D.G."/>
            <person name="Leclerc J.E."/>
            <person name="Ravel J."/>
            <person name="Cebula T.A."/>
        </authorList>
    </citation>
    <scope>NUCLEOTIDE SEQUENCE [LARGE SCALE GENOMIC DNA]</scope>
    <source>
        <strain>SL254</strain>
    </source>
</reference>
<proteinExistence type="inferred from homology"/>
<protein>
    <recommendedName>
        <fullName evidence="1">3-hydroxyacyl-[acyl-carrier-protein] dehydratase FabZ</fullName>
        <ecNumber evidence="1">4.2.1.59</ecNumber>
    </recommendedName>
    <alternativeName>
        <fullName evidence="1">(3R)-hydroxymyristoyl-[acyl-carrier-protein] dehydratase</fullName>
        <shortName evidence="1">(3R)-hydroxymyristoyl-ACP dehydrase</shortName>
    </alternativeName>
    <alternativeName>
        <fullName evidence="1">Beta-hydroxyacyl-ACP dehydratase</fullName>
    </alternativeName>
</protein>
<evidence type="ECO:0000255" key="1">
    <source>
        <dbReference type="HAMAP-Rule" id="MF_00406"/>
    </source>
</evidence>